<protein>
    <recommendedName>
        <fullName evidence="1">4-hydroxy-tetrahydrodipicolinate synthase</fullName>
        <shortName evidence="1">HTPA synthase</shortName>
        <ecNumber evidence="1">4.3.3.7</ecNumber>
    </recommendedName>
</protein>
<evidence type="ECO:0000255" key="1">
    <source>
        <dbReference type="HAMAP-Rule" id="MF_00418"/>
    </source>
</evidence>
<evidence type="ECO:0000305" key="2"/>
<gene>
    <name evidence="1" type="primary">dapA</name>
    <name type="ordered locus">lwe1452</name>
</gene>
<comment type="function">
    <text evidence="1">Catalyzes the condensation of (S)-aspartate-beta-semialdehyde [(S)-ASA] and pyruvate to 4-hydroxy-tetrahydrodipicolinate (HTPA).</text>
</comment>
<comment type="catalytic activity">
    <reaction evidence="1">
        <text>L-aspartate 4-semialdehyde + pyruvate = (2S,4S)-4-hydroxy-2,3,4,5-tetrahydrodipicolinate + H2O + H(+)</text>
        <dbReference type="Rhea" id="RHEA:34171"/>
        <dbReference type="ChEBI" id="CHEBI:15361"/>
        <dbReference type="ChEBI" id="CHEBI:15377"/>
        <dbReference type="ChEBI" id="CHEBI:15378"/>
        <dbReference type="ChEBI" id="CHEBI:67139"/>
        <dbReference type="ChEBI" id="CHEBI:537519"/>
        <dbReference type="EC" id="4.3.3.7"/>
    </reaction>
</comment>
<comment type="pathway">
    <text evidence="1">Amino-acid biosynthesis; L-lysine biosynthesis via DAP pathway; (S)-tetrahydrodipicolinate from L-aspartate: step 3/4.</text>
</comment>
<comment type="subunit">
    <text evidence="1">Homotetramer; dimer of dimers.</text>
</comment>
<comment type="subcellular location">
    <subcellularLocation>
        <location evidence="1">Cytoplasm</location>
    </subcellularLocation>
</comment>
<comment type="similarity">
    <text evidence="1">Belongs to the DapA family.</text>
</comment>
<comment type="caution">
    <text evidence="2">Was originally thought to be a dihydrodipicolinate synthase (DHDPS), catalyzing the condensation of (S)-aspartate-beta-semialdehyde [(S)-ASA] and pyruvate to dihydrodipicolinate (DHDP). However, it was shown in E.coli that the product of the enzymatic reaction is not dihydrodipicolinate but in fact (4S)-4-hydroxy-2,3,4,5-tetrahydro-(2S)-dipicolinic acid (HTPA), and that the consecutive dehydration reaction leading to DHDP is not spontaneous but catalyzed by DapB.</text>
</comment>
<accession>A0AIN8</accession>
<reference key="1">
    <citation type="journal article" date="2006" name="J. Bacteriol.">
        <title>Whole-genome sequence of Listeria welshimeri reveals common steps in genome reduction with Listeria innocua as compared to Listeria monocytogenes.</title>
        <authorList>
            <person name="Hain T."/>
            <person name="Steinweg C."/>
            <person name="Kuenne C.T."/>
            <person name="Billion A."/>
            <person name="Ghai R."/>
            <person name="Chatterjee S.S."/>
            <person name="Domann E."/>
            <person name="Kaerst U."/>
            <person name="Goesmann A."/>
            <person name="Bekel T."/>
            <person name="Bartels D."/>
            <person name="Kaiser O."/>
            <person name="Meyer F."/>
            <person name="Puehler A."/>
            <person name="Weisshaar B."/>
            <person name="Wehland J."/>
            <person name="Liang C."/>
            <person name="Dandekar T."/>
            <person name="Lampidis R."/>
            <person name="Kreft J."/>
            <person name="Goebel W."/>
            <person name="Chakraborty T."/>
        </authorList>
    </citation>
    <scope>NUCLEOTIDE SEQUENCE [LARGE SCALE GENOMIC DNA]</scope>
    <source>
        <strain>ATCC 35897 / DSM 20650 / CCUG 15529 / CIP 8149 / NCTC 11857 / SLCC 5334 / V8</strain>
    </source>
</reference>
<organism>
    <name type="scientific">Listeria welshimeri serovar 6b (strain ATCC 35897 / DSM 20650 / CCUG 15529 / CIP 8149 / NCTC 11857 / SLCC 5334 / V8)</name>
    <dbReference type="NCBI Taxonomy" id="386043"/>
    <lineage>
        <taxon>Bacteria</taxon>
        <taxon>Bacillati</taxon>
        <taxon>Bacillota</taxon>
        <taxon>Bacilli</taxon>
        <taxon>Bacillales</taxon>
        <taxon>Listeriaceae</taxon>
        <taxon>Listeria</taxon>
    </lineage>
</organism>
<proteinExistence type="inferred from homology"/>
<dbReference type="EC" id="4.3.3.7" evidence="1"/>
<dbReference type="EMBL" id="AM263198">
    <property type="protein sequence ID" value="CAK20870.1"/>
    <property type="molecule type" value="Genomic_DNA"/>
</dbReference>
<dbReference type="RefSeq" id="WP_011702248.1">
    <property type="nucleotide sequence ID" value="NC_008555.1"/>
</dbReference>
<dbReference type="SMR" id="A0AIN8"/>
<dbReference type="STRING" id="386043.lwe1452"/>
<dbReference type="GeneID" id="61189328"/>
<dbReference type="KEGG" id="lwe:lwe1452"/>
<dbReference type="eggNOG" id="COG0329">
    <property type="taxonomic scope" value="Bacteria"/>
</dbReference>
<dbReference type="HOGENOM" id="CLU_049343_7_1_9"/>
<dbReference type="OrthoDB" id="9782828at2"/>
<dbReference type="UniPathway" id="UPA00034">
    <property type="reaction ID" value="UER00017"/>
</dbReference>
<dbReference type="Proteomes" id="UP000000779">
    <property type="component" value="Chromosome"/>
</dbReference>
<dbReference type="GO" id="GO:0005829">
    <property type="term" value="C:cytosol"/>
    <property type="evidence" value="ECO:0007669"/>
    <property type="project" value="TreeGrafter"/>
</dbReference>
<dbReference type="GO" id="GO:0008840">
    <property type="term" value="F:4-hydroxy-tetrahydrodipicolinate synthase activity"/>
    <property type="evidence" value="ECO:0007669"/>
    <property type="project" value="UniProtKB-UniRule"/>
</dbReference>
<dbReference type="GO" id="GO:0019877">
    <property type="term" value="P:diaminopimelate biosynthetic process"/>
    <property type="evidence" value="ECO:0007669"/>
    <property type="project" value="UniProtKB-UniRule"/>
</dbReference>
<dbReference type="GO" id="GO:0009089">
    <property type="term" value="P:lysine biosynthetic process via diaminopimelate"/>
    <property type="evidence" value="ECO:0007669"/>
    <property type="project" value="UniProtKB-UniRule"/>
</dbReference>
<dbReference type="CDD" id="cd00950">
    <property type="entry name" value="DHDPS"/>
    <property type="match status" value="1"/>
</dbReference>
<dbReference type="Gene3D" id="3.20.20.70">
    <property type="entry name" value="Aldolase class I"/>
    <property type="match status" value="1"/>
</dbReference>
<dbReference type="HAMAP" id="MF_00418">
    <property type="entry name" value="DapA"/>
    <property type="match status" value="1"/>
</dbReference>
<dbReference type="InterPro" id="IPR013785">
    <property type="entry name" value="Aldolase_TIM"/>
</dbReference>
<dbReference type="InterPro" id="IPR005263">
    <property type="entry name" value="DapA"/>
</dbReference>
<dbReference type="InterPro" id="IPR002220">
    <property type="entry name" value="DapA-like"/>
</dbReference>
<dbReference type="InterPro" id="IPR020625">
    <property type="entry name" value="Schiff_base-form_aldolases_AS"/>
</dbReference>
<dbReference type="InterPro" id="IPR020624">
    <property type="entry name" value="Schiff_base-form_aldolases_CS"/>
</dbReference>
<dbReference type="NCBIfam" id="TIGR00674">
    <property type="entry name" value="dapA"/>
    <property type="match status" value="1"/>
</dbReference>
<dbReference type="PANTHER" id="PTHR12128:SF66">
    <property type="entry name" value="4-HYDROXY-2-OXOGLUTARATE ALDOLASE, MITOCHONDRIAL"/>
    <property type="match status" value="1"/>
</dbReference>
<dbReference type="PANTHER" id="PTHR12128">
    <property type="entry name" value="DIHYDRODIPICOLINATE SYNTHASE"/>
    <property type="match status" value="1"/>
</dbReference>
<dbReference type="Pfam" id="PF00701">
    <property type="entry name" value="DHDPS"/>
    <property type="match status" value="1"/>
</dbReference>
<dbReference type="PIRSF" id="PIRSF001365">
    <property type="entry name" value="DHDPS"/>
    <property type="match status" value="1"/>
</dbReference>
<dbReference type="PRINTS" id="PR00146">
    <property type="entry name" value="DHPICSNTHASE"/>
</dbReference>
<dbReference type="SMART" id="SM01130">
    <property type="entry name" value="DHDPS"/>
    <property type="match status" value="1"/>
</dbReference>
<dbReference type="SUPFAM" id="SSF51569">
    <property type="entry name" value="Aldolase"/>
    <property type="match status" value="1"/>
</dbReference>
<dbReference type="PROSITE" id="PS00665">
    <property type="entry name" value="DHDPS_1"/>
    <property type="match status" value="1"/>
</dbReference>
<dbReference type="PROSITE" id="PS00666">
    <property type="entry name" value="DHDPS_2"/>
    <property type="match status" value="1"/>
</dbReference>
<feature type="chain" id="PRO_1000050209" description="4-hydroxy-tetrahydrodipicolinate synthase">
    <location>
        <begin position="1"/>
        <end position="293"/>
    </location>
</feature>
<feature type="active site" description="Proton donor/acceptor" evidence="1">
    <location>
        <position position="136"/>
    </location>
</feature>
<feature type="active site" description="Schiff-base intermediate with substrate" evidence="1">
    <location>
        <position position="164"/>
    </location>
</feature>
<feature type="binding site" evidence="1">
    <location>
        <position position="47"/>
    </location>
    <ligand>
        <name>pyruvate</name>
        <dbReference type="ChEBI" id="CHEBI:15361"/>
    </ligand>
</feature>
<feature type="binding site" evidence="1">
    <location>
        <position position="206"/>
    </location>
    <ligand>
        <name>pyruvate</name>
        <dbReference type="ChEBI" id="CHEBI:15361"/>
    </ligand>
</feature>
<feature type="site" description="Part of a proton relay during catalysis" evidence="1">
    <location>
        <position position="46"/>
    </location>
</feature>
<feature type="site" description="Part of a proton relay during catalysis" evidence="1">
    <location>
        <position position="110"/>
    </location>
</feature>
<name>DAPA_LISW6</name>
<sequence>MDLGKVITAMVTPIHPEKDKVCKKRIHHLVNHLIANGSDGLVVAGTTGESPTLSHDEKIKLFRQVIETNAGRAKLIAGTGSNNTAETIAFTKEVAELGGIDAVLVVAPYYNKPNQDGLYAHFVAVAEASDLPVVIYNIPGRSVVNIEPETIIRLAKLPNIVGVKESSGNLDNISKIIAETPEDFLVYSGDDSLTLPILAVGGDGVISVASHVVGKEMQEMIQAFARGEVQKAASIHRSLLPIMNGLFAVPNPAPTKYLLNQQGISVGPVRLPLVDLNAEQGTKLQAILEGLSK</sequence>
<keyword id="KW-0028">Amino-acid biosynthesis</keyword>
<keyword id="KW-0963">Cytoplasm</keyword>
<keyword id="KW-0220">Diaminopimelate biosynthesis</keyword>
<keyword id="KW-0456">Lyase</keyword>
<keyword id="KW-0457">Lysine biosynthesis</keyword>
<keyword id="KW-0704">Schiff base</keyword>